<comment type="function">
    <text evidence="1">Catalyzes the synthesis of GMP from XMP.</text>
</comment>
<comment type="catalytic activity">
    <reaction evidence="1">
        <text>XMP + L-glutamine + ATP + H2O = GMP + L-glutamate + AMP + diphosphate + 2 H(+)</text>
        <dbReference type="Rhea" id="RHEA:11680"/>
        <dbReference type="ChEBI" id="CHEBI:15377"/>
        <dbReference type="ChEBI" id="CHEBI:15378"/>
        <dbReference type="ChEBI" id="CHEBI:29985"/>
        <dbReference type="ChEBI" id="CHEBI:30616"/>
        <dbReference type="ChEBI" id="CHEBI:33019"/>
        <dbReference type="ChEBI" id="CHEBI:57464"/>
        <dbReference type="ChEBI" id="CHEBI:58115"/>
        <dbReference type="ChEBI" id="CHEBI:58359"/>
        <dbReference type="ChEBI" id="CHEBI:456215"/>
        <dbReference type="EC" id="6.3.5.2"/>
    </reaction>
</comment>
<comment type="pathway">
    <text evidence="1">Purine metabolism; GMP biosynthesis; GMP from XMP (L-Gln route): step 1/1.</text>
</comment>
<comment type="subunit">
    <text evidence="1">Homodimer.</text>
</comment>
<proteinExistence type="inferred from homology"/>
<name>GUAA_YERPG</name>
<keyword id="KW-0067">ATP-binding</keyword>
<keyword id="KW-0315">Glutamine amidotransferase</keyword>
<keyword id="KW-0332">GMP biosynthesis</keyword>
<keyword id="KW-0436">Ligase</keyword>
<keyword id="KW-0547">Nucleotide-binding</keyword>
<keyword id="KW-0658">Purine biosynthesis</keyword>
<feature type="chain" id="PRO_1000120460" description="GMP synthase [glutamine-hydrolyzing]">
    <location>
        <begin position="1"/>
        <end position="525"/>
    </location>
</feature>
<feature type="domain" description="Glutamine amidotransferase type-1" evidence="1">
    <location>
        <begin position="9"/>
        <end position="207"/>
    </location>
</feature>
<feature type="domain" description="GMPS ATP-PPase" evidence="1">
    <location>
        <begin position="208"/>
        <end position="400"/>
    </location>
</feature>
<feature type="active site" description="Nucleophile" evidence="1">
    <location>
        <position position="86"/>
    </location>
</feature>
<feature type="active site" evidence="1">
    <location>
        <position position="181"/>
    </location>
</feature>
<feature type="active site" evidence="1">
    <location>
        <position position="183"/>
    </location>
</feature>
<feature type="binding site" evidence="1">
    <location>
        <begin position="235"/>
        <end position="241"/>
    </location>
    <ligand>
        <name>ATP</name>
        <dbReference type="ChEBI" id="CHEBI:30616"/>
    </ligand>
</feature>
<accession>A9R7Z2</accession>
<dbReference type="EC" id="6.3.5.2" evidence="1"/>
<dbReference type="EMBL" id="CP000901">
    <property type="protein sequence ID" value="ABX87511.1"/>
    <property type="molecule type" value="Genomic_DNA"/>
</dbReference>
<dbReference type="RefSeq" id="WP_002209807.1">
    <property type="nucleotide sequence ID" value="NZ_CP009935.1"/>
</dbReference>
<dbReference type="SMR" id="A9R7Z2"/>
<dbReference type="MEROPS" id="C26.957"/>
<dbReference type="GeneID" id="57975827"/>
<dbReference type="KEGG" id="ypg:YpAngola_A0408"/>
<dbReference type="PATRIC" id="fig|349746.12.peg.1363"/>
<dbReference type="UniPathway" id="UPA00189">
    <property type="reaction ID" value="UER00296"/>
</dbReference>
<dbReference type="GO" id="GO:0005829">
    <property type="term" value="C:cytosol"/>
    <property type="evidence" value="ECO:0007669"/>
    <property type="project" value="TreeGrafter"/>
</dbReference>
<dbReference type="GO" id="GO:0005524">
    <property type="term" value="F:ATP binding"/>
    <property type="evidence" value="ECO:0007669"/>
    <property type="project" value="UniProtKB-UniRule"/>
</dbReference>
<dbReference type="GO" id="GO:0003921">
    <property type="term" value="F:GMP synthase activity"/>
    <property type="evidence" value="ECO:0007669"/>
    <property type="project" value="InterPro"/>
</dbReference>
<dbReference type="CDD" id="cd01742">
    <property type="entry name" value="GATase1_GMP_Synthase"/>
    <property type="match status" value="1"/>
</dbReference>
<dbReference type="CDD" id="cd01997">
    <property type="entry name" value="GMP_synthase_C"/>
    <property type="match status" value="1"/>
</dbReference>
<dbReference type="FunFam" id="3.30.300.10:FF:000002">
    <property type="entry name" value="GMP synthase [glutamine-hydrolyzing]"/>
    <property type="match status" value="1"/>
</dbReference>
<dbReference type="FunFam" id="3.40.50.620:FF:000001">
    <property type="entry name" value="GMP synthase [glutamine-hydrolyzing]"/>
    <property type="match status" value="1"/>
</dbReference>
<dbReference type="FunFam" id="3.40.50.880:FF:000001">
    <property type="entry name" value="GMP synthase [glutamine-hydrolyzing]"/>
    <property type="match status" value="1"/>
</dbReference>
<dbReference type="Gene3D" id="3.30.300.10">
    <property type="match status" value="1"/>
</dbReference>
<dbReference type="Gene3D" id="3.40.50.880">
    <property type="match status" value="1"/>
</dbReference>
<dbReference type="Gene3D" id="3.40.50.620">
    <property type="entry name" value="HUPs"/>
    <property type="match status" value="1"/>
</dbReference>
<dbReference type="HAMAP" id="MF_00344">
    <property type="entry name" value="GMP_synthase"/>
    <property type="match status" value="1"/>
</dbReference>
<dbReference type="InterPro" id="IPR029062">
    <property type="entry name" value="Class_I_gatase-like"/>
</dbReference>
<dbReference type="InterPro" id="IPR017926">
    <property type="entry name" value="GATASE"/>
</dbReference>
<dbReference type="InterPro" id="IPR001674">
    <property type="entry name" value="GMP_synth_C"/>
</dbReference>
<dbReference type="InterPro" id="IPR004739">
    <property type="entry name" value="GMP_synth_GATase"/>
</dbReference>
<dbReference type="InterPro" id="IPR022955">
    <property type="entry name" value="GMP_synthase"/>
</dbReference>
<dbReference type="InterPro" id="IPR025777">
    <property type="entry name" value="GMPS_ATP_PPase_dom"/>
</dbReference>
<dbReference type="InterPro" id="IPR022310">
    <property type="entry name" value="NAD/GMP_synthase"/>
</dbReference>
<dbReference type="InterPro" id="IPR014729">
    <property type="entry name" value="Rossmann-like_a/b/a_fold"/>
</dbReference>
<dbReference type="NCBIfam" id="TIGR00884">
    <property type="entry name" value="guaA_Cterm"/>
    <property type="match status" value="1"/>
</dbReference>
<dbReference type="NCBIfam" id="TIGR00888">
    <property type="entry name" value="guaA_Nterm"/>
    <property type="match status" value="1"/>
</dbReference>
<dbReference type="NCBIfam" id="NF000848">
    <property type="entry name" value="PRK00074.1"/>
    <property type="match status" value="1"/>
</dbReference>
<dbReference type="PANTHER" id="PTHR11922:SF2">
    <property type="entry name" value="GMP SYNTHASE [GLUTAMINE-HYDROLYZING]"/>
    <property type="match status" value="1"/>
</dbReference>
<dbReference type="PANTHER" id="PTHR11922">
    <property type="entry name" value="GMP SYNTHASE-RELATED"/>
    <property type="match status" value="1"/>
</dbReference>
<dbReference type="Pfam" id="PF00117">
    <property type="entry name" value="GATase"/>
    <property type="match status" value="1"/>
</dbReference>
<dbReference type="Pfam" id="PF00958">
    <property type="entry name" value="GMP_synt_C"/>
    <property type="match status" value="1"/>
</dbReference>
<dbReference type="Pfam" id="PF02540">
    <property type="entry name" value="NAD_synthase"/>
    <property type="match status" value="1"/>
</dbReference>
<dbReference type="PRINTS" id="PR00097">
    <property type="entry name" value="ANTSNTHASEII"/>
</dbReference>
<dbReference type="PRINTS" id="PR00096">
    <property type="entry name" value="GATASE"/>
</dbReference>
<dbReference type="SUPFAM" id="SSF52402">
    <property type="entry name" value="Adenine nucleotide alpha hydrolases-like"/>
    <property type="match status" value="1"/>
</dbReference>
<dbReference type="SUPFAM" id="SSF52317">
    <property type="entry name" value="Class I glutamine amidotransferase-like"/>
    <property type="match status" value="1"/>
</dbReference>
<dbReference type="SUPFAM" id="SSF54810">
    <property type="entry name" value="GMP synthetase C-terminal dimerisation domain"/>
    <property type="match status" value="1"/>
</dbReference>
<dbReference type="PROSITE" id="PS51273">
    <property type="entry name" value="GATASE_TYPE_1"/>
    <property type="match status" value="1"/>
</dbReference>
<dbReference type="PROSITE" id="PS51553">
    <property type="entry name" value="GMPS_ATP_PPASE"/>
    <property type="match status" value="1"/>
</dbReference>
<gene>
    <name evidence="1" type="primary">guaA</name>
    <name type="ordered locus">YpAngola_A0408</name>
</gene>
<evidence type="ECO:0000255" key="1">
    <source>
        <dbReference type="HAMAP-Rule" id="MF_00344"/>
    </source>
</evidence>
<organism>
    <name type="scientific">Yersinia pestis bv. Antiqua (strain Angola)</name>
    <dbReference type="NCBI Taxonomy" id="349746"/>
    <lineage>
        <taxon>Bacteria</taxon>
        <taxon>Pseudomonadati</taxon>
        <taxon>Pseudomonadota</taxon>
        <taxon>Gammaproteobacteria</taxon>
        <taxon>Enterobacterales</taxon>
        <taxon>Yersiniaceae</taxon>
        <taxon>Yersinia</taxon>
    </lineage>
</organism>
<sequence length="525" mass="58422">MTKNIHKHRILILDFGSQYTQLLARRVREIGVYCELWAWDVTEAQIREFNPSGIILSGSPESTIENGSPRAPDYVFTAGVPVLGVCYGMQTMAIQLGGKVESSNQREFGYAQVEIKADSALIRDIKDAINPAGEAVLDVWMSHGDKVAEIPADFVTVASTDTCPFAIMANEEKRFYGVQFHPEVTHTKQGLRLLERFVLGICGCEALWTSATIIEDAIVRLREQIGDDHVILGLSGGVDSSVTAMLLHRAIGKRLTCVFVDNGLLRLNEADQVLEMFGDKFGLNIVHVAAEDRFLSALTGVDEPEAKRKIIGRVFVELFDEEACKQEQVKWLAQGTIYPDVIESAASATGKAHVIKSHHNVGGLPKEMKLGLVEPLKELFKDEVRKIGLELGLPYDMLYRHPFPGPGLGVRVLGEVKKEYCDLLRRADAIFIEELHKADLYNKVSQAFTVFLPVRSVGVMGDGRKYDWVVSLRAVETVDFMTAHWAHLPYDFLGRVSNRIINEVNGISRVVYDISGKPPATIEWE</sequence>
<protein>
    <recommendedName>
        <fullName evidence="1">GMP synthase [glutamine-hydrolyzing]</fullName>
        <ecNumber evidence="1">6.3.5.2</ecNumber>
    </recommendedName>
    <alternativeName>
        <fullName evidence="1">GMP synthetase</fullName>
    </alternativeName>
    <alternativeName>
        <fullName evidence="1">Glutamine amidotransferase</fullName>
    </alternativeName>
</protein>
<reference key="1">
    <citation type="journal article" date="2010" name="J. Bacteriol.">
        <title>Genome sequence of the deep-rooted Yersinia pestis strain Angola reveals new insights into the evolution and pangenome of the plague bacterium.</title>
        <authorList>
            <person name="Eppinger M."/>
            <person name="Worsham P.L."/>
            <person name="Nikolich M.P."/>
            <person name="Riley D.R."/>
            <person name="Sebastian Y."/>
            <person name="Mou S."/>
            <person name="Achtman M."/>
            <person name="Lindler L.E."/>
            <person name="Ravel J."/>
        </authorList>
    </citation>
    <scope>NUCLEOTIDE SEQUENCE [LARGE SCALE GENOMIC DNA]</scope>
    <source>
        <strain>Angola</strain>
    </source>
</reference>